<keyword id="KW-0002">3D-structure</keyword>
<keyword id="KW-0067">ATP-binding</keyword>
<keyword id="KW-0997">Cell inner membrane</keyword>
<keyword id="KW-1003">Cell membrane</keyword>
<keyword id="KW-1015">Disulfide bond</keyword>
<keyword id="KW-0378">Hydrolase</keyword>
<keyword id="KW-0472">Membrane</keyword>
<keyword id="KW-0547">Nucleotide-binding</keyword>
<keyword id="KW-1185">Reference proteome</keyword>
<keyword id="KW-0677">Repeat</keyword>
<keyword id="KW-0812">Transmembrane</keyword>
<keyword id="KW-1133">Transmembrane helix</keyword>
<keyword id="KW-0813">Transport</keyword>
<dbReference type="EC" id="3.6.-.-" evidence="9"/>
<dbReference type="EMBL" id="AL123456">
    <property type="protein sequence ID" value="CCP46698.1"/>
    <property type="molecule type" value="Genomic_DNA"/>
</dbReference>
<dbReference type="PIR" id="C70802">
    <property type="entry name" value="C70802"/>
</dbReference>
<dbReference type="RefSeq" id="NP_218386.1">
    <property type="nucleotide sequence ID" value="NC_000962.3"/>
</dbReference>
<dbReference type="RefSeq" id="WP_003399854.1">
    <property type="nucleotide sequence ID" value="NZ_NVQJ01000074.1"/>
</dbReference>
<dbReference type="PDB" id="3X3M">
    <property type="method" value="X-ray"/>
    <property type="resolution" value="1.90 A"/>
    <property type="chains" value="A=72-480"/>
</dbReference>
<dbReference type="PDB" id="3X3N">
    <property type="method" value="X-ray"/>
    <property type="resolution" value="2.00 A"/>
    <property type="chains" value="A=72-480"/>
</dbReference>
<dbReference type="PDB" id="4KK7">
    <property type="method" value="X-ray"/>
    <property type="resolution" value="1.68 A"/>
    <property type="chains" value="A=72-463"/>
</dbReference>
<dbReference type="PDB" id="5EBC">
    <property type="method" value="X-ray"/>
    <property type="resolution" value="3.00 A"/>
    <property type="chains" value="A=72-480"/>
</dbReference>
<dbReference type="PDB" id="5EBD">
    <property type="method" value="X-ray"/>
    <property type="resolution" value="2.60 A"/>
    <property type="chains" value="A=72-480"/>
</dbReference>
<dbReference type="PDBsum" id="3X3M"/>
<dbReference type="PDBsum" id="3X3N"/>
<dbReference type="PDBsum" id="4KK7"/>
<dbReference type="PDBsum" id="5EBC"/>
<dbReference type="PDBsum" id="5EBD"/>
<dbReference type="SMR" id="P9WNR7"/>
<dbReference type="FunCoup" id="P9WNR7">
    <property type="interactions" value="2"/>
</dbReference>
<dbReference type="IntAct" id="P9WNR7">
    <property type="interactions" value="1"/>
</dbReference>
<dbReference type="STRING" id="83332.Rv3869"/>
<dbReference type="PaxDb" id="83332-Rv3869"/>
<dbReference type="DNASU" id="886166"/>
<dbReference type="GeneID" id="886166"/>
<dbReference type="KEGG" id="mtu:Rv3869"/>
<dbReference type="KEGG" id="mtv:RVBD_3869"/>
<dbReference type="TubercuList" id="Rv3869"/>
<dbReference type="eggNOG" id="COG3266">
    <property type="taxonomic scope" value="Bacteria"/>
</dbReference>
<dbReference type="InParanoid" id="P9WNR7"/>
<dbReference type="OrthoDB" id="3847604at2"/>
<dbReference type="PhylomeDB" id="P9WNR7"/>
<dbReference type="SABIO-RK" id="P9WNR7"/>
<dbReference type="EvolutionaryTrace" id="P9WNR7"/>
<dbReference type="Proteomes" id="UP000001584">
    <property type="component" value="Chromosome"/>
</dbReference>
<dbReference type="GO" id="GO:0005576">
    <property type="term" value="C:extracellular region"/>
    <property type="evidence" value="ECO:0007005"/>
    <property type="project" value="MTBBASE"/>
</dbReference>
<dbReference type="GO" id="GO:0009274">
    <property type="term" value="C:peptidoglycan-based cell wall"/>
    <property type="evidence" value="ECO:0007005"/>
    <property type="project" value="MTBBASE"/>
</dbReference>
<dbReference type="GO" id="GO:0005886">
    <property type="term" value="C:plasma membrane"/>
    <property type="evidence" value="ECO:0007669"/>
    <property type="project" value="UniProtKB-SubCell"/>
</dbReference>
<dbReference type="GO" id="GO:0005524">
    <property type="term" value="F:ATP binding"/>
    <property type="evidence" value="ECO:0007669"/>
    <property type="project" value="UniProtKB-KW"/>
</dbReference>
<dbReference type="GO" id="GO:0016787">
    <property type="term" value="F:hydrolase activity"/>
    <property type="evidence" value="ECO:0007669"/>
    <property type="project" value="UniProtKB-KW"/>
</dbReference>
<dbReference type="GO" id="GO:0052167">
    <property type="term" value="P:symbiont-mediated perturbation of host innate immune response"/>
    <property type="evidence" value="ECO:0000314"/>
    <property type="project" value="MTBBASE"/>
</dbReference>
<dbReference type="DisProt" id="DP01739"/>
<dbReference type="FunFam" id="2.40.50.910:FF:000001">
    <property type="entry name" value="ESX-1 secretion system ATPase EccB1"/>
    <property type="match status" value="1"/>
</dbReference>
<dbReference type="FunFam" id="3.30.2390.20:FF:000001">
    <property type="entry name" value="ESX-1 secretion system ATPase EccB1"/>
    <property type="match status" value="1"/>
</dbReference>
<dbReference type="Gene3D" id="3.30.2390.20">
    <property type="entry name" value="Type VII secretion system EccB, repeat 1 domain"/>
    <property type="match status" value="1"/>
</dbReference>
<dbReference type="Gene3D" id="2.40.50.910">
    <property type="entry name" value="Type VII secretion system EccB, repeat 3 domain"/>
    <property type="match status" value="1"/>
</dbReference>
<dbReference type="InterPro" id="IPR007795">
    <property type="entry name" value="T7SS_EccB"/>
</dbReference>
<dbReference type="InterPro" id="IPR044857">
    <property type="entry name" value="T7SS_EccB_R1"/>
</dbReference>
<dbReference type="InterPro" id="IPR042485">
    <property type="entry name" value="T7SS_EccB_R3"/>
</dbReference>
<dbReference type="NCBIfam" id="TIGR03919">
    <property type="entry name" value="T7SS_EccB"/>
    <property type="match status" value="1"/>
</dbReference>
<dbReference type="PANTHER" id="PTHR40765">
    <property type="entry name" value="ESX-2 SECRETION SYSTEM ATPASE ECCB2"/>
    <property type="match status" value="1"/>
</dbReference>
<dbReference type="PANTHER" id="PTHR40765:SF2">
    <property type="entry name" value="ESX-2 SECRETION SYSTEM ATPASE ECCB2"/>
    <property type="match status" value="1"/>
</dbReference>
<dbReference type="Pfam" id="PF05108">
    <property type="entry name" value="T7SS_ESX1_EccB"/>
    <property type="match status" value="1"/>
</dbReference>
<sequence>MGLRLTTKVQVSGWRFLLRRLEHAIVRRDTRMFDDPLQFYSRSIALGIVVAVLILAGAALLAYFKPQGKLGGTSLFTDRATNQLYVLLSGQLHPVYNLTSARLVLGNPANPATVKSSELSKLPMGQTVGIPGAPYATPVSAGSTSIWTLCDTVARADSTSPVVQTAVIAMPLEIDASIDPLQSHEAVLVSYQGETWIVTTKGRHAIDLTDRALTSSMGIPVTARPTPISEGMFNALPDMGPWQLPPIPAAGAPNSLGLPDDLVIGSVFQIHTDKGPQYYVVLPDGIAQVNATTAAALRATQAHGLVAPPAMVPSLVVRIAERVYPSPLPDEPLKIVSRPQDPALCWSWQRSAGDQSPQSTVLSGRHLPISPSAMNMGIKQIHGTATVYLDGGKFVALQSPDPRYTESMYYIDPQGVRYGVPNAETAKSLGLSSPQNAPWEIVRLLVDGPVLSKDAALLEHDTLPADPSPRKVPAGASGAP</sequence>
<name>ECCB1_MYCTU</name>
<comment type="function">
    <text evidence="3 5">An ATPase (PubMed:26396239). Part of the ESX-1 specialized secretion system, which delivers several virulence factors to host cells during infection, including the key virulence factors EsxA (ESAT-6) and EsxB (CFP-10) (PubMed:16368961).</text>
</comment>
<comment type="cofactor">
    <cofactor evidence="5">
        <name>Mg(2+)</name>
        <dbReference type="ChEBI" id="CHEBI:18420"/>
    </cofactor>
    <text evidence="5">Ca(2+) has 50% activity (PubMed:26396239).</text>
</comment>
<comment type="activity regulation">
    <text evidence="5">ATPase activity inhibited by EDTA (PubMed:26396239).</text>
</comment>
<comment type="biophysicochemical properties">
    <kinetics>
        <KM evidence="5">94.94 uM for ATP, whole protein</KM>
        <KM evidence="5">9.87 uM for ATP, residues 72-480</KM>
        <text evidence="5">kcat is 0.76 min(-1) for full-length protein, kcat is 0.11 min(-1) for residues 72-480.</text>
    </kinetics>
</comment>
<comment type="subunit">
    <text evidence="3 4 10 11">Oligomerizes, possibly a hexamer (PubMed:26396239). Part of the ESX-1 / type VII secretion system (T7SS), which is composed of cytosolic and membrane components. The ESX-1 membrane complex is composed of EccB1, EccCa1, EccCb1, EccD1 and EccE1. Residues 72-342 interact with an artificial EsxB-EsxA heterodimer (PubMed:19854905).</text>
</comment>
<comment type="subcellular location">
    <subcellularLocation>
        <location evidence="11">Cell inner membrane</location>
        <topology evidence="1">Single-pass membrane protein</topology>
    </subcellularLocation>
    <text evidence="5">Resides at or near the cell wall, the protein is susceptible to extracellular proteases (PubMed:26396239).</text>
</comment>
<comment type="domain">
    <text evidence="5 6 7">Has a discontinuous central core of beta sheets stabilized by a disulfide bond that is flanked by 2 structural domain repeats on each side; the protein forms an elongated 'S'-shaped structure (PubMed:26396239, PubMed:26841765, PubMed:26922638). Repeat A2 (approximately residues 265-323) is farthest from the cell inner membrane and is quite mobile, swinging on 2 inter-repeat loops (A, residues 234-264 and B, 324-341) (PubMed:26841765).</text>
</comment>
<comment type="disruption phenotype">
    <text evidence="3">Disruption abolishes EsxA and EsxB secretion, but not their expression. It results in a lack of antigen specific immunogenicity and leads to attenuated virulence.</text>
</comment>
<comment type="similarity">
    <text evidence="9">Belongs to the EccB family.</text>
</comment>
<evidence type="ECO:0000255" key="1"/>
<evidence type="ECO:0000256" key="2">
    <source>
        <dbReference type="SAM" id="MobiDB-lite"/>
    </source>
</evidence>
<evidence type="ECO:0000269" key="3">
    <source>
    </source>
</evidence>
<evidence type="ECO:0000269" key="4">
    <source>
    </source>
</evidence>
<evidence type="ECO:0000269" key="5">
    <source>
    </source>
</evidence>
<evidence type="ECO:0000269" key="6">
    <source>
    </source>
</evidence>
<evidence type="ECO:0000269" key="7">
    <source>
    </source>
</evidence>
<evidence type="ECO:0000303" key="8">
    <source>
    </source>
</evidence>
<evidence type="ECO:0000305" key="9"/>
<evidence type="ECO:0000305" key="10">
    <source>
    </source>
</evidence>
<evidence type="ECO:0000305" key="11">
    <source>
    </source>
</evidence>
<evidence type="ECO:0000305" key="12">
    <source>
    </source>
</evidence>
<evidence type="ECO:0000305" key="13">
    <source>
    </source>
</evidence>
<evidence type="ECO:0007744" key="14">
    <source>
        <dbReference type="PDB" id="3X3M"/>
    </source>
</evidence>
<evidence type="ECO:0007744" key="15">
    <source>
        <dbReference type="PDB" id="3X3N"/>
    </source>
</evidence>
<evidence type="ECO:0007744" key="16">
    <source>
        <dbReference type="PDB" id="4KK7"/>
    </source>
</evidence>
<evidence type="ECO:0007744" key="17">
    <source>
        <dbReference type="PDB" id="5EBC"/>
    </source>
</evidence>
<evidence type="ECO:0007744" key="18">
    <source>
        <dbReference type="PDB" id="5EBD"/>
    </source>
</evidence>
<evidence type="ECO:0007829" key="19">
    <source>
        <dbReference type="PDB" id="3X3M"/>
    </source>
</evidence>
<evidence type="ECO:0007829" key="20">
    <source>
        <dbReference type="PDB" id="3X3N"/>
    </source>
</evidence>
<evidence type="ECO:0007829" key="21">
    <source>
        <dbReference type="PDB" id="5EBC"/>
    </source>
</evidence>
<evidence type="ECO:0007829" key="22">
    <source>
        <dbReference type="PDB" id="5EBD"/>
    </source>
</evidence>
<proteinExistence type="evidence at protein level"/>
<organism>
    <name type="scientific">Mycobacterium tuberculosis (strain ATCC 25618 / H37Rv)</name>
    <dbReference type="NCBI Taxonomy" id="83332"/>
    <lineage>
        <taxon>Bacteria</taxon>
        <taxon>Bacillati</taxon>
        <taxon>Actinomycetota</taxon>
        <taxon>Actinomycetes</taxon>
        <taxon>Mycobacteriales</taxon>
        <taxon>Mycobacteriaceae</taxon>
        <taxon>Mycobacterium</taxon>
        <taxon>Mycobacterium tuberculosis complex</taxon>
    </lineage>
</organism>
<feature type="chain" id="PRO_0000393228" description="ESX-1 secretion system ATPase EccB1">
    <location>
        <begin position="1"/>
        <end position="480"/>
    </location>
</feature>
<feature type="topological domain" description="Cytoplasmic" evidence="9">
    <location>
        <begin position="1"/>
        <end position="43"/>
    </location>
</feature>
<feature type="transmembrane region" description="Helical" evidence="1">
    <location>
        <begin position="44"/>
        <end position="64"/>
    </location>
</feature>
<feature type="topological domain" description="Periplasmic" evidence="11 13">
    <location>
        <begin position="65"/>
        <end position="480"/>
    </location>
</feature>
<feature type="region of interest" description="Structural repeat A1/1" evidence="11 12 13">
    <location>
        <begin position="72"/>
        <end position="135"/>
    </location>
</feature>
<feature type="region of interest" description="Structural repeat C1/2" evidence="11 12 13">
    <location>
        <begin position="181"/>
        <end position="242"/>
    </location>
</feature>
<feature type="region of interest" description="Loop A" evidence="12">
    <location>
        <begin position="243"/>
        <end position="264"/>
    </location>
</feature>
<feature type="region of interest" description="Structural repeat A2/3" evidence="11 12 13">
    <location>
        <begin position="265"/>
        <end position="323"/>
    </location>
</feature>
<feature type="region of interest" description="Loop B" evidence="12">
    <location>
        <begin position="324"/>
        <end position="341"/>
    </location>
</feature>
<feature type="region of interest" description="Structural repeat C2/4" evidence="11 12 13">
    <location>
        <begin position="391"/>
        <end position="451"/>
    </location>
</feature>
<feature type="region of interest" description="Disordered" evidence="2">
    <location>
        <begin position="461"/>
        <end position="480"/>
    </location>
</feature>
<feature type="disulfide bond" evidence="5 7 16">
    <location>
        <begin position="150"/>
        <end position="345"/>
    </location>
</feature>
<feature type="mutagenesis site" description="No ATPase activity (residues 106-480 only)." evidence="5">
    <location>
        <begin position="72"/>
        <end position="105"/>
    </location>
</feature>
<feature type="mutagenesis site" description="Retains 40% ATPase activity (in residues 72-480)." evidence="5">
    <original>R</original>
    <variation>A</variation>
    <location>
        <position position="102"/>
    </location>
</feature>
<feature type="mutagenesis site" description="Retains only 20% decrease ATPase activity (in residues 72-480); probably due to loss of secondary structure." evidence="5">
    <original>C</original>
    <variation>S</variation>
    <location>
        <position position="150"/>
    </location>
</feature>
<feature type="mutagenesis site" description="2-fold increase in ATPase activity (residues 72-448 only)." evidence="5">
    <location>
        <begin position="449"/>
        <end position="480"/>
    </location>
</feature>
<feature type="mutagenesis site" description="6-fold increase in ATPase activity (residues 106-463 only)." evidence="5">
    <location>
        <begin position="463"/>
        <end position="480"/>
    </location>
</feature>
<feature type="strand" evidence="19">
    <location>
        <begin position="75"/>
        <end position="78"/>
    </location>
</feature>
<feature type="turn" evidence="19">
    <location>
        <begin position="79"/>
        <end position="81"/>
    </location>
</feature>
<feature type="strand" evidence="19">
    <location>
        <begin position="84"/>
        <end position="88"/>
    </location>
</feature>
<feature type="strand" evidence="19">
    <location>
        <begin position="91"/>
        <end position="96"/>
    </location>
</feature>
<feature type="helix" evidence="19">
    <location>
        <begin position="98"/>
        <end position="105"/>
    </location>
</feature>
<feature type="strand" evidence="19">
    <location>
        <begin position="112"/>
        <end position="114"/>
    </location>
</feature>
<feature type="helix" evidence="19">
    <location>
        <begin position="116"/>
        <end position="119"/>
    </location>
</feature>
<feature type="strand" evidence="19">
    <location>
        <begin position="127"/>
        <end position="129"/>
    </location>
</feature>
<feature type="strand" evidence="19">
    <location>
        <begin position="143"/>
        <end position="155"/>
    </location>
</feature>
<feature type="strand" evidence="19">
    <location>
        <begin position="158"/>
        <end position="160"/>
    </location>
</feature>
<feature type="strand" evidence="19">
    <location>
        <begin position="162"/>
        <end position="170"/>
    </location>
</feature>
<feature type="strand" evidence="19">
    <location>
        <begin position="178"/>
        <end position="180"/>
    </location>
</feature>
<feature type="strand" evidence="19">
    <location>
        <begin position="185"/>
        <end position="191"/>
    </location>
</feature>
<feature type="strand" evidence="19">
    <location>
        <begin position="194"/>
        <end position="199"/>
    </location>
</feature>
<feature type="strand" evidence="19">
    <location>
        <begin position="202"/>
        <end position="206"/>
    </location>
</feature>
<feature type="strand" evidence="21">
    <location>
        <begin position="208"/>
        <end position="210"/>
    </location>
</feature>
<feature type="helix" evidence="19">
    <location>
        <begin position="211"/>
        <end position="216"/>
    </location>
</feature>
<feature type="strand" evidence="21">
    <location>
        <begin position="221"/>
        <end position="223"/>
    </location>
</feature>
<feature type="helix" evidence="19">
    <location>
        <begin position="230"/>
        <end position="235"/>
    </location>
</feature>
<feature type="strand" evidence="22">
    <location>
        <begin position="238"/>
        <end position="241"/>
    </location>
</feature>
<feature type="turn" evidence="19">
    <location>
        <begin position="248"/>
        <end position="251"/>
    </location>
</feature>
<feature type="strand" evidence="19">
    <location>
        <begin position="255"/>
        <end position="257"/>
    </location>
</feature>
<feature type="strand" evidence="19">
    <location>
        <begin position="267"/>
        <end position="272"/>
    </location>
</feature>
<feature type="strand" evidence="19">
    <location>
        <begin position="275"/>
        <end position="282"/>
    </location>
</feature>
<feature type="strand" evidence="19">
    <location>
        <begin position="285"/>
        <end position="289"/>
    </location>
</feature>
<feature type="helix" evidence="19">
    <location>
        <begin position="291"/>
        <end position="300"/>
    </location>
</feature>
<feature type="helix" evidence="19">
    <location>
        <begin position="313"/>
        <end position="316"/>
    </location>
</feature>
<feature type="turn" evidence="19">
    <location>
        <begin position="338"/>
        <end position="340"/>
    </location>
</feature>
<feature type="strand" evidence="19">
    <location>
        <begin position="343"/>
        <end position="350"/>
    </location>
</feature>
<feature type="strand" evidence="20">
    <location>
        <begin position="352"/>
        <end position="354"/>
    </location>
</feature>
<feature type="strand" evidence="19">
    <location>
        <begin position="358"/>
        <end position="366"/>
    </location>
</feature>
<feature type="helix" evidence="19">
    <location>
        <begin position="373"/>
        <end position="375"/>
    </location>
</feature>
<feature type="strand" evidence="22">
    <location>
        <begin position="377"/>
        <end position="379"/>
    </location>
</feature>
<feature type="strand" evidence="19">
    <location>
        <begin position="384"/>
        <end position="391"/>
    </location>
</feature>
<feature type="strand" evidence="19">
    <location>
        <begin position="393"/>
        <end position="411"/>
    </location>
</feature>
<feature type="strand" evidence="19">
    <location>
        <begin position="415"/>
        <end position="419"/>
    </location>
</feature>
<feature type="helix" evidence="19">
    <location>
        <begin position="423"/>
        <end position="429"/>
    </location>
</feature>
<feature type="helix" evidence="19">
    <location>
        <begin position="439"/>
        <end position="442"/>
    </location>
</feature>
<feature type="strand" evidence="19">
    <location>
        <begin position="445"/>
        <end position="447"/>
    </location>
</feature>
<feature type="helix" evidence="19">
    <location>
        <begin position="453"/>
        <end position="456"/>
    </location>
</feature>
<feature type="strand" evidence="19">
    <location>
        <begin position="459"/>
        <end position="462"/>
    </location>
</feature>
<accession>P9WNR7</accession>
<accession>L0TDT4</accession>
<accession>O69734</accession>
<accession>Q7D4P7</accession>
<protein>
    <recommendedName>
        <fullName evidence="9">ESX-1 secretion system ATPase EccB1</fullName>
        <ecNumber evidence="9">3.6.-.-</ecNumber>
    </recommendedName>
    <alternativeName>
        <fullName evidence="8">ESX conserved component B1</fullName>
    </alternativeName>
    <alternativeName>
        <fullName evidence="9">Type VII secretion system protein EccB1</fullName>
        <shortName evidence="9">T7SS protein EccB1</shortName>
    </alternativeName>
</protein>
<reference key="1">
    <citation type="journal article" date="1998" name="Nature">
        <title>Deciphering the biology of Mycobacterium tuberculosis from the complete genome sequence.</title>
        <authorList>
            <person name="Cole S.T."/>
            <person name="Brosch R."/>
            <person name="Parkhill J."/>
            <person name="Garnier T."/>
            <person name="Churcher C.M."/>
            <person name="Harris D.E."/>
            <person name="Gordon S.V."/>
            <person name="Eiglmeier K."/>
            <person name="Gas S."/>
            <person name="Barry C.E. III"/>
            <person name="Tekaia F."/>
            <person name="Badcock K."/>
            <person name="Basham D."/>
            <person name="Brown D."/>
            <person name="Chillingworth T."/>
            <person name="Connor R."/>
            <person name="Davies R.M."/>
            <person name="Devlin K."/>
            <person name="Feltwell T."/>
            <person name="Gentles S."/>
            <person name="Hamlin N."/>
            <person name="Holroyd S."/>
            <person name="Hornsby T."/>
            <person name="Jagels K."/>
            <person name="Krogh A."/>
            <person name="McLean J."/>
            <person name="Moule S."/>
            <person name="Murphy L.D."/>
            <person name="Oliver S."/>
            <person name="Osborne J."/>
            <person name="Quail M.A."/>
            <person name="Rajandream M.A."/>
            <person name="Rogers J."/>
            <person name="Rutter S."/>
            <person name="Seeger K."/>
            <person name="Skelton S."/>
            <person name="Squares S."/>
            <person name="Squares R."/>
            <person name="Sulston J.E."/>
            <person name="Taylor K."/>
            <person name="Whitehead S."/>
            <person name="Barrell B.G."/>
        </authorList>
    </citation>
    <scope>NUCLEOTIDE SEQUENCE [LARGE SCALE GENOMIC DNA]</scope>
    <source>
        <strain>ATCC 25618 / H37Rv</strain>
    </source>
</reference>
<reference key="2">
    <citation type="journal article" date="2006" name="Infect. Immun.">
        <title>Dissection of ESAT-6 system 1 of Mycobacterium tuberculosis and impact on immunogenicity and virulence.</title>
        <authorList>
            <person name="Brodin P."/>
            <person name="Majlessi L."/>
            <person name="Marsollier L."/>
            <person name="de Jonge M.I."/>
            <person name="Bottai D."/>
            <person name="Demangel C."/>
            <person name="Hinds J."/>
            <person name="Neyrolles O."/>
            <person name="Butcher P.D."/>
            <person name="Leclerc C."/>
            <person name="Cole S.T."/>
            <person name="Brosch R."/>
        </authorList>
    </citation>
    <scope>FUNCTION</scope>
    <scope>SUBUNIT</scope>
    <scope>DISRUPTION PHENOTYPE</scope>
</reference>
<reference key="3">
    <citation type="journal article" date="2009" name="PLoS Pathog.">
        <title>Systematic genetic nomenclature for type VII secretion systems.</title>
        <authorList>
            <person name="Bitter W."/>
            <person name="Houben E.N."/>
            <person name="Bottai D."/>
            <person name="Brodin P."/>
            <person name="Brown E.J."/>
            <person name="Cox J.S."/>
            <person name="Derbyshire K."/>
            <person name="Fortune S.M."/>
            <person name="Gao L.Y."/>
            <person name="Liu J."/>
            <person name="Gey van Pittius N.C."/>
            <person name="Pym A.S."/>
            <person name="Rubin E.J."/>
            <person name="Sherman D.R."/>
            <person name="Cole S.T."/>
            <person name="Brosch R."/>
        </authorList>
    </citation>
    <scope>NOMENCLATURE</scope>
    <scope>SUBUNIT</scope>
</reference>
<reference key="4">
    <citation type="journal article" date="2010" name="J. Bacteriol.">
        <title>Conservation of structure and protein-protein interactions mediated by the secreted mycobacterial proteins EsxA, EsxB, and EspA.</title>
        <authorList>
            <person name="Callahan B."/>
            <person name="Nguyen K."/>
            <person name="Collins A."/>
            <person name="Valdes K."/>
            <person name="Caplow M."/>
            <person name="Crossman D.K."/>
            <person name="Steyn A.J."/>
            <person name="Eisele L."/>
            <person name="Derbyshire K.M."/>
        </authorList>
    </citation>
    <scope>SUBUNIT</scope>
    <source>
        <strain>ATCC 25618 / H37Rv</strain>
    </source>
</reference>
<reference key="5">
    <citation type="journal article" date="2011" name="Mol. Cell. Proteomics">
        <title>Proteogenomic analysis of Mycobacterium tuberculosis by high resolution mass spectrometry.</title>
        <authorList>
            <person name="Kelkar D.S."/>
            <person name="Kumar D."/>
            <person name="Kumar P."/>
            <person name="Balakrishnan L."/>
            <person name="Muthusamy B."/>
            <person name="Yadav A.K."/>
            <person name="Shrivastava P."/>
            <person name="Marimuthu A."/>
            <person name="Anand S."/>
            <person name="Sundaram H."/>
            <person name="Kingsbury R."/>
            <person name="Harsha H.C."/>
            <person name="Nair B."/>
            <person name="Prasad T.S."/>
            <person name="Chauhan D.S."/>
            <person name="Katoch K."/>
            <person name="Katoch V.M."/>
            <person name="Kumar P."/>
            <person name="Chaerkady R."/>
            <person name="Ramachandran S."/>
            <person name="Dash D."/>
            <person name="Pandey A."/>
        </authorList>
    </citation>
    <scope>IDENTIFICATION BY MASS SPECTROMETRY [LARGE SCALE ANALYSIS]</scope>
    <source>
        <strain>ATCC 25618 / H37Rv</strain>
    </source>
</reference>
<reference evidence="14 15" key="6">
    <citation type="journal article" date="2015" name="FASEB J.">
        <title>Core component EccB1 of the Mycobacterium tuberculosis type VII secretion system is a periplasmic ATPase.</title>
        <authorList>
            <person name="Zhang X.L."/>
            <person name="Li D.F."/>
            <person name="Fleming J."/>
            <person name="Wang L.W."/>
            <person name="Zhou Y."/>
            <person name="Wang D.C."/>
            <person name="Zhang X.E."/>
            <person name="Bi L.J."/>
        </authorList>
    </citation>
    <scope>X-RAY CRYSTALLOGRAPHY (1.90 ANGSTROMS) OF 72-480</scope>
    <scope>FUNCTION AS AN ATPASE</scope>
    <scope>COFACTOR</scope>
    <scope>ACTIVITY REGULATION</scope>
    <scope>BIOPHYSICOCHEMICAL PROPERTIES</scope>
    <scope>SUBUNIT</scope>
    <scope>SUBCELLULAR LOCATION</scope>
    <scope>DOMAIN</scope>
    <scope>TOPOLOGY</scope>
    <scope>ATP-BINDING</scope>
    <scope>DISULFIDE BOND</scope>
    <scope>MUTAGENESIS OF 72-GLY--LEU-105; ARG-102; CYS-150; 449-PRO--PRO-480 AND 463-LEU--PRO-480</scope>
    <source>
        <strain>H37Rv</strain>
    </source>
</reference>
<reference evidence="17 18" key="7">
    <citation type="journal article" date="2016" name="Acta Crystallogr. F Struct. Biol. Commun.">
        <title>Crystallographic observation of the movement of the membrane-distal domain of the T7SS core component EccB1 from Mycobacterium tuberculosis.</title>
        <authorList>
            <person name="Xie X.Q."/>
            <person name="Zhang X.L."/>
            <person name="Qi C."/>
            <person name="Li D.F."/>
            <person name="Fleming J."/>
            <person name="Wang D.C."/>
            <person name="Bi L.J."/>
        </authorList>
    </citation>
    <scope>X-RAY CRYSTALLOGRAPHY (2.60 ANGSTROMS) OF 72-480</scope>
    <source>
        <strain>H37Rv</strain>
    </source>
</reference>
<reference evidence="16" key="8">
    <citation type="journal article" date="2016" name="BMC Struct. Biol.">
        <title>Structures of EccB1 and EccD1 from the core complex of the mycobacterial ESX-1 type VII secretion system.</title>
        <authorList>
            <person name="Wagner J.M."/>
            <person name="Chan S."/>
            <person name="Evans T.J."/>
            <person name="Kahng S."/>
            <person name="Kim J."/>
            <person name="Arbing M.A."/>
            <person name="Eisenberg D."/>
            <person name="Korotkov K.V."/>
        </authorList>
    </citation>
    <scope>X-RAY CRYSTALLOGRAPHY (1.68 ANGSTROMS) OF 72-463</scope>
    <scope>DOMAIN</scope>
    <scope>TOPOLOGY</scope>
    <scope>DISULFIDE BOND</scope>
    <source>
        <strain>H37Rv</strain>
    </source>
</reference>
<gene>
    <name evidence="8" type="primary">eccB1</name>
    <name type="ordered locus">Rv3869</name>
</gene>